<proteinExistence type="inferred from homology"/>
<feature type="chain" id="PRO_0000335714" description="4-diphosphocytidyl-2-C-methyl-D-erythritol kinase">
    <location>
        <begin position="1"/>
        <end position="272"/>
    </location>
</feature>
<feature type="active site" evidence="1">
    <location>
        <position position="14"/>
    </location>
</feature>
<feature type="active site" evidence="1">
    <location>
        <position position="132"/>
    </location>
</feature>
<feature type="binding site" evidence="1">
    <location>
        <begin position="92"/>
        <end position="102"/>
    </location>
    <ligand>
        <name>ATP</name>
        <dbReference type="ChEBI" id="CHEBI:30616"/>
    </ligand>
</feature>
<evidence type="ECO:0000255" key="1">
    <source>
        <dbReference type="HAMAP-Rule" id="MF_00061"/>
    </source>
</evidence>
<comment type="function">
    <text evidence="1">Catalyzes the phosphorylation of the position 2 hydroxy group of 4-diphosphocytidyl-2C-methyl-D-erythritol.</text>
</comment>
<comment type="catalytic activity">
    <reaction evidence="1">
        <text>4-CDP-2-C-methyl-D-erythritol + ATP = 4-CDP-2-C-methyl-D-erythritol 2-phosphate + ADP + H(+)</text>
        <dbReference type="Rhea" id="RHEA:18437"/>
        <dbReference type="ChEBI" id="CHEBI:15378"/>
        <dbReference type="ChEBI" id="CHEBI:30616"/>
        <dbReference type="ChEBI" id="CHEBI:57823"/>
        <dbReference type="ChEBI" id="CHEBI:57919"/>
        <dbReference type="ChEBI" id="CHEBI:456216"/>
        <dbReference type="EC" id="2.7.1.148"/>
    </reaction>
</comment>
<comment type="pathway">
    <text evidence="1">Isoprenoid biosynthesis; isopentenyl diphosphate biosynthesis via DXP pathway; isopentenyl diphosphate from 1-deoxy-D-xylulose 5-phosphate: step 3/6.</text>
</comment>
<comment type="similarity">
    <text evidence="1">Belongs to the GHMP kinase family. IspE subfamily.</text>
</comment>
<gene>
    <name evidence="1" type="primary">ispE</name>
    <name type="ordered locus">Fnod_1663</name>
</gene>
<dbReference type="EC" id="2.7.1.148" evidence="1"/>
<dbReference type="EMBL" id="CP000771">
    <property type="protein sequence ID" value="ABS61498.1"/>
    <property type="molecule type" value="Genomic_DNA"/>
</dbReference>
<dbReference type="RefSeq" id="WP_011994789.1">
    <property type="nucleotide sequence ID" value="NC_009718.1"/>
</dbReference>
<dbReference type="SMR" id="A7HNL5"/>
<dbReference type="STRING" id="381764.Fnod_1663"/>
<dbReference type="KEGG" id="fno:Fnod_1663"/>
<dbReference type="eggNOG" id="COG1947">
    <property type="taxonomic scope" value="Bacteria"/>
</dbReference>
<dbReference type="HOGENOM" id="CLU_053057_2_0_0"/>
<dbReference type="OrthoDB" id="9809438at2"/>
<dbReference type="UniPathway" id="UPA00056">
    <property type="reaction ID" value="UER00094"/>
</dbReference>
<dbReference type="Proteomes" id="UP000002415">
    <property type="component" value="Chromosome"/>
</dbReference>
<dbReference type="GO" id="GO:0050515">
    <property type="term" value="F:4-(cytidine 5'-diphospho)-2-C-methyl-D-erythritol kinase activity"/>
    <property type="evidence" value="ECO:0007669"/>
    <property type="project" value="UniProtKB-UniRule"/>
</dbReference>
<dbReference type="GO" id="GO:0005524">
    <property type="term" value="F:ATP binding"/>
    <property type="evidence" value="ECO:0007669"/>
    <property type="project" value="UniProtKB-UniRule"/>
</dbReference>
<dbReference type="GO" id="GO:0019288">
    <property type="term" value="P:isopentenyl diphosphate biosynthetic process, methylerythritol 4-phosphate pathway"/>
    <property type="evidence" value="ECO:0007669"/>
    <property type="project" value="UniProtKB-UniRule"/>
</dbReference>
<dbReference type="GO" id="GO:0016114">
    <property type="term" value="P:terpenoid biosynthetic process"/>
    <property type="evidence" value="ECO:0007669"/>
    <property type="project" value="InterPro"/>
</dbReference>
<dbReference type="Gene3D" id="3.30.230.10">
    <property type="match status" value="1"/>
</dbReference>
<dbReference type="Gene3D" id="3.30.70.890">
    <property type="entry name" value="GHMP kinase, C-terminal domain"/>
    <property type="match status" value="1"/>
</dbReference>
<dbReference type="HAMAP" id="MF_00061">
    <property type="entry name" value="IspE"/>
    <property type="match status" value="1"/>
</dbReference>
<dbReference type="InterPro" id="IPR036554">
    <property type="entry name" value="GHMP_kinase_C_sf"/>
</dbReference>
<dbReference type="InterPro" id="IPR006204">
    <property type="entry name" value="GHMP_kinase_N_dom"/>
</dbReference>
<dbReference type="InterPro" id="IPR004424">
    <property type="entry name" value="IspE"/>
</dbReference>
<dbReference type="InterPro" id="IPR020568">
    <property type="entry name" value="Ribosomal_Su5_D2-typ_SF"/>
</dbReference>
<dbReference type="InterPro" id="IPR014721">
    <property type="entry name" value="Ribsml_uS5_D2-typ_fold_subgr"/>
</dbReference>
<dbReference type="NCBIfam" id="TIGR00154">
    <property type="entry name" value="ispE"/>
    <property type="match status" value="1"/>
</dbReference>
<dbReference type="PANTHER" id="PTHR43527">
    <property type="entry name" value="4-DIPHOSPHOCYTIDYL-2-C-METHYL-D-ERYTHRITOL KINASE, CHLOROPLASTIC"/>
    <property type="match status" value="1"/>
</dbReference>
<dbReference type="PANTHER" id="PTHR43527:SF2">
    <property type="entry name" value="4-DIPHOSPHOCYTIDYL-2-C-METHYL-D-ERYTHRITOL KINASE, CHLOROPLASTIC"/>
    <property type="match status" value="1"/>
</dbReference>
<dbReference type="Pfam" id="PF00288">
    <property type="entry name" value="GHMP_kinases_N"/>
    <property type="match status" value="1"/>
</dbReference>
<dbReference type="PIRSF" id="PIRSF010376">
    <property type="entry name" value="IspE"/>
    <property type="match status" value="1"/>
</dbReference>
<dbReference type="SUPFAM" id="SSF55060">
    <property type="entry name" value="GHMP Kinase, C-terminal domain"/>
    <property type="match status" value="1"/>
</dbReference>
<dbReference type="SUPFAM" id="SSF54211">
    <property type="entry name" value="Ribosomal protein S5 domain 2-like"/>
    <property type="match status" value="1"/>
</dbReference>
<reference key="1">
    <citation type="submission" date="2007-07" db="EMBL/GenBank/DDBJ databases">
        <title>Complete sequence of Fervidobacterium nodosum Rt17-B1.</title>
        <authorList>
            <consortium name="US DOE Joint Genome Institute"/>
            <person name="Copeland A."/>
            <person name="Lucas S."/>
            <person name="Lapidus A."/>
            <person name="Barry K."/>
            <person name="Glavina del Rio T."/>
            <person name="Dalin E."/>
            <person name="Tice H."/>
            <person name="Pitluck S."/>
            <person name="Saunders E."/>
            <person name="Brettin T."/>
            <person name="Bruce D."/>
            <person name="Detter J.C."/>
            <person name="Han C."/>
            <person name="Schmutz J."/>
            <person name="Larimer F."/>
            <person name="Land M."/>
            <person name="Hauser L."/>
            <person name="Kyrpides N."/>
            <person name="Mikhailova N."/>
            <person name="Nelson K."/>
            <person name="Gogarten J.P."/>
            <person name="Noll K."/>
            <person name="Richardson P."/>
        </authorList>
    </citation>
    <scope>NUCLEOTIDE SEQUENCE [LARGE SCALE GENOMIC DNA]</scope>
    <source>
        <strain>ATCC 35602 / DSM 5306 / Rt17-B1</strain>
    </source>
</reference>
<name>ISPE_FERNB</name>
<accession>A7HNL5</accession>
<protein>
    <recommendedName>
        <fullName evidence="1">4-diphosphocytidyl-2-C-methyl-D-erythritol kinase</fullName>
        <shortName evidence="1">CMK</shortName>
        <ecNumber evidence="1">2.7.1.148</ecNumber>
    </recommendedName>
    <alternativeName>
        <fullName evidence="1">4-(cytidine-5'-diphospho)-2-C-methyl-D-erythritol kinase</fullName>
    </alternativeName>
</protein>
<keyword id="KW-0067">ATP-binding</keyword>
<keyword id="KW-0414">Isoprene biosynthesis</keyword>
<keyword id="KW-0418">Kinase</keyword>
<keyword id="KW-0547">Nucleotide-binding</keyword>
<keyword id="KW-1185">Reference proteome</keyword>
<keyword id="KW-0808">Transferase</keyword>
<organism>
    <name type="scientific">Fervidobacterium nodosum (strain ATCC 35602 / DSM 5306 / Rt17-B1)</name>
    <dbReference type="NCBI Taxonomy" id="381764"/>
    <lineage>
        <taxon>Bacteria</taxon>
        <taxon>Thermotogati</taxon>
        <taxon>Thermotogota</taxon>
        <taxon>Thermotogae</taxon>
        <taxon>Thermotogales</taxon>
        <taxon>Fervidobacteriaceae</taxon>
        <taxon>Fervidobacterium</taxon>
    </lineage>
</organism>
<sequence>MGESYRIVLRTYAKLNLCLDVLGKRQDGYHEINSLFQNISLFDEMDITLSDGKGKLLINSNVNIGNNILNSVWELVNCDNKNVYVNLQKNIPMGGGLGGGSSNAAGFIIALEKVGIISKEQSLKIAQKVGSDVPFFLFGGTAIVKGRGEVILPVEPLTNFGKFKVDLHLPNFSISTKEAYSKLKAEWFGKAPITPEELYDFYKTRNFEMIKKGTYNIFERVIPMDLLEKIESLRRDFPAALTGSGSTYFALKEDGKYSFVPKGVEINAFEKS</sequence>